<evidence type="ECO:0000250" key="1"/>
<evidence type="ECO:0000255" key="2"/>
<evidence type="ECO:0000256" key="3">
    <source>
        <dbReference type="SAM" id="MobiDB-lite"/>
    </source>
</evidence>
<evidence type="ECO:0000269" key="4">
    <source>
    </source>
</evidence>
<evidence type="ECO:0000305" key="5"/>
<evidence type="ECO:0007829" key="6">
    <source>
        <dbReference type="PDB" id="8BEE"/>
    </source>
</evidence>
<accession>Q42577</accession>
<name>NDUS7_ARATH</name>
<keyword id="KW-0002">3D-structure</keyword>
<keyword id="KW-0004">4Fe-4S</keyword>
<keyword id="KW-0249">Electron transport</keyword>
<keyword id="KW-0408">Iron</keyword>
<keyword id="KW-0411">Iron-sulfur</keyword>
<keyword id="KW-0479">Metal-binding</keyword>
<keyword id="KW-0496">Mitochondrion</keyword>
<keyword id="KW-0520">NAD</keyword>
<keyword id="KW-0560">Oxidoreductase</keyword>
<keyword id="KW-1185">Reference proteome</keyword>
<keyword id="KW-0679">Respiratory chain</keyword>
<keyword id="KW-0809">Transit peptide</keyword>
<keyword id="KW-1278">Translocase</keyword>
<keyword id="KW-0813">Transport</keyword>
<keyword id="KW-0830">Ubiquinone</keyword>
<comment type="function">
    <text evidence="1">Core subunit of the mitochondrial membrane respiratory chain NADH dehydrogenase (Complex I) that is believed to belong to the minimal assembly required for catalysis. Complex I functions in the transfer of electrons from NADH to the respiratory chain. The immediate electron acceptor for the enzyme is believed to be ubiquinone (By similarity).</text>
</comment>
<comment type="catalytic activity">
    <reaction>
        <text>a ubiquinone + NADH + 5 H(+)(in) = a ubiquinol + NAD(+) + 4 H(+)(out)</text>
        <dbReference type="Rhea" id="RHEA:29091"/>
        <dbReference type="Rhea" id="RHEA-COMP:9565"/>
        <dbReference type="Rhea" id="RHEA-COMP:9566"/>
        <dbReference type="ChEBI" id="CHEBI:15378"/>
        <dbReference type="ChEBI" id="CHEBI:16389"/>
        <dbReference type="ChEBI" id="CHEBI:17976"/>
        <dbReference type="ChEBI" id="CHEBI:57540"/>
        <dbReference type="ChEBI" id="CHEBI:57945"/>
        <dbReference type="EC" id="7.1.1.2"/>
    </reaction>
</comment>
<comment type="cofactor">
    <cofactor evidence="5">
        <name>[4Fe-4S] cluster</name>
        <dbReference type="ChEBI" id="CHEBI:49883"/>
    </cofactor>
    <text evidence="5">Binds 1 [4Fe-4S] cluster.</text>
</comment>
<comment type="subunit">
    <text>Complex I is composed of at least 49 different subunits. This is a component of the iron-sulfur (IP) fragment of the enzyme.</text>
</comment>
<comment type="subcellular location">
    <subcellularLocation>
        <location evidence="4">Mitochondrion</location>
    </subcellularLocation>
</comment>
<comment type="similarity">
    <text evidence="5">Belongs to the complex I 20 kDa subunit family.</text>
</comment>
<feature type="transit peptide" description="Mitochondrion" evidence="2">
    <location>
        <begin position="1"/>
        <end status="unknown"/>
    </location>
</feature>
<feature type="chain" id="PRO_0000020033" description="NADH dehydrogenase [ubiquinone] iron-sulfur protein 7, mitochondrial">
    <location>
        <begin status="unknown"/>
        <end position="218"/>
    </location>
</feature>
<feature type="region of interest" description="Disordered" evidence="3">
    <location>
        <begin position="34"/>
        <end position="61"/>
    </location>
</feature>
<feature type="compositionally biased region" description="Low complexity" evidence="3">
    <location>
        <begin position="34"/>
        <end position="48"/>
    </location>
</feature>
<feature type="compositionally biased region" description="Pro residues" evidence="3">
    <location>
        <begin position="49"/>
        <end position="60"/>
    </location>
</feature>
<feature type="binding site" evidence="2">
    <location>
        <position position="93"/>
    </location>
    <ligand>
        <name>[4Fe-4S] cluster</name>
        <dbReference type="ChEBI" id="CHEBI:49883"/>
    </ligand>
</feature>
<feature type="binding site" evidence="2">
    <location>
        <position position="94"/>
    </location>
    <ligand>
        <name>[4Fe-4S] cluster</name>
        <dbReference type="ChEBI" id="CHEBI:49883"/>
    </ligand>
</feature>
<feature type="binding site" evidence="2">
    <location>
        <position position="158"/>
    </location>
    <ligand>
        <name>[4Fe-4S] cluster</name>
        <dbReference type="ChEBI" id="CHEBI:49883"/>
    </ligand>
</feature>
<feature type="binding site" evidence="2">
    <location>
        <position position="188"/>
    </location>
    <ligand>
        <name>[4Fe-4S] cluster</name>
        <dbReference type="ChEBI" id="CHEBI:49883"/>
    </ligand>
</feature>
<feature type="helix" evidence="6">
    <location>
        <begin position="65"/>
        <end position="82"/>
    </location>
</feature>
<feature type="strand" evidence="6">
    <location>
        <begin position="86"/>
        <end position="90"/>
    </location>
</feature>
<feature type="helix" evidence="6">
    <location>
        <begin position="94"/>
        <end position="102"/>
    </location>
</feature>
<feature type="turn" evidence="6">
    <location>
        <begin position="104"/>
        <end position="106"/>
    </location>
</feature>
<feature type="helix" evidence="6">
    <location>
        <begin position="108"/>
        <end position="111"/>
    </location>
</feature>
<feature type="helix" evidence="6">
    <location>
        <begin position="119"/>
        <end position="121"/>
    </location>
</feature>
<feature type="strand" evidence="6">
    <location>
        <begin position="123"/>
        <end position="129"/>
    </location>
</feature>
<feature type="turn" evidence="6">
    <location>
        <begin position="133"/>
        <end position="135"/>
    </location>
</feature>
<feature type="helix" evidence="6">
    <location>
        <begin position="136"/>
        <end position="144"/>
    </location>
</feature>
<feature type="strand" evidence="6">
    <location>
        <begin position="151"/>
        <end position="155"/>
    </location>
</feature>
<feature type="helix" evidence="6">
    <location>
        <begin position="156"/>
        <end position="161"/>
    </location>
</feature>
<feature type="helix" evidence="6">
    <location>
        <begin position="163"/>
        <end position="165"/>
    </location>
</feature>
<feature type="strand" evidence="6">
    <location>
        <begin position="169"/>
        <end position="171"/>
    </location>
</feature>
<feature type="helix" evidence="6">
    <location>
        <begin position="175"/>
        <end position="177"/>
    </location>
</feature>
<feature type="strand" evidence="6">
    <location>
        <begin position="182"/>
        <end position="185"/>
    </location>
</feature>
<feature type="strand" evidence="6">
    <location>
        <begin position="187"/>
        <end position="189"/>
    </location>
</feature>
<feature type="helix" evidence="6">
    <location>
        <begin position="192"/>
        <end position="206"/>
    </location>
</feature>
<feature type="helix" evidence="6">
    <location>
        <begin position="211"/>
        <end position="217"/>
    </location>
</feature>
<gene>
    <name type="ordered locus">At5g11770</name>
    <name type="ORF">T22P22_160</name>
</gene>
<sequence>MAMITRNTATRLPLLLQSQRAVAAASVSHLHTSLPALSPSTSPTSYTRPGPPSTSPPPPGLSKAAEFVISKVDDLMNWARTGSIWPMTFGLACCAVEMMHTGAARYDLDRFGIIFRPSPRQSDCMIVAGTLTNKMAPALRKVYDQMPEPRWVISMGSCANGGGYYHYSYSVVRGCDRIVPVDIYVPGCPPTAEALLYGLLQLQKKINRRKDFLHWWNK</sequence>
<dbReference type="EC" id="7.1.1.2"/>
<dbReference type="EMBL" id="X84078">
    <property type="protein sequence ID" value="CAA58887.1"/>
    <property type="molecule type" value="mRNA"/>
</dbReference>
<dbReference type="EMBL" id="AL163814">
    <property type="protein sequence ID" value="CAB87695.1"/>
    <property type="molecule type" value="Genomic_DNA"/>
</dbReference>
<dbReference type="EMBL" id="CP002688">
    <property type="protein sequence ID" value="AED91719.1"/>
    <property type="molecule type" value="Genomic_DNA"/>
</dbReference>
<dbReference type="EMBL" id="AF428300">
    <property type="protein sequence ID" value="AAL16132.1"/>
    <property type="molecule type" value="mRNA"/>
</dbReference>
<dbReference type="EMBL" id="AY056182">
    <property type="protein sequence ID" value="AAL07031.1"/>
    <property type="molecule type" value="mRNA"/>
</dbReference>
<dbReference type="EMBL" id="AY099848">
    <property type="protein sequence ID" value="AAM20699.1"/>
    <property type="molecule type" value="mRNA"/>
</dbReference>
<dbReference type="EMBL" id="AY128912">
    <property type="protein sequence ID" value="AAM91312.1"/>
    <property type="molecule type" value="mRNA"/>
</dbReference>
<dbReference type="EMBL" id="AY085120">
    <property type="protein sequence ID" value="AAM61674.1"/>
    <property type="molecule type" value="mRNA"/>
</dbReference>
<dbReference type="PIR" id="S52286">
    <property type="entry name" value="S52286"/>
</dbReference>
<dbReference type="RefSeq" id="NP_196738.1">
    <property type="nucleotide sequence ID" value="NM_121215.4"/>
</dbReference>
<dbReference type="PDB" id="7A24">
    <property type="method" value="EM"/>
    <property type="resolution" value="3.80 A"/>
    <property type="chains" value="E=1-218"/>
</dbReference>
<dbReference type="PDB" id="7AQR">
    <property type="method" value="EM"/>
    <property type="resolution" value="2.91 A"/>
    <property type="chains" value="B=1-218"/>
</dbReference>
<dbReference type="PDB" id="7AR7">
    <property type="method" value="EM"/>
    <property type="resolution" value="3.72 A"/>
    <property type="chains" value="B=62-218"/>
</dbReference>
<dbReference type="PDB" id="7AR8">
    <property type="method" value="EM"/>
    <property type="resolution" value="3.53 A"/>
    <property type="chains" value="B=1-218"/>
</dbReference>
<dbReference type="PDB" id="7ARB">
    <property type="method" value="EM"/>
    <property type="resolution" value="3.41 A"/>
    <property type="chains" value="B=1-218"/>
</dbReference>
<dbReference type="PDB" id="8BEE">
    <property type="method" value="EM"/>
    <property type="resolution" value="2.04 A"/>
    <property type="chains" value="B=1-218"/>
</dbReference>
<dbReference type="PDB" id="8BPX">
    <property type="method" value="EM"/>
    <property type="resolution" value="2.09 A"/>
    <property type="chains" value="B=1-218"/>
</dbReference>
<dbReference type="PDB" id="8BQ5">
    <property type="method" value="EM"/>
    <property type="resolution" value="2.73 A"/>
    <property type="chains" value="B=1-218"/>
</dbReference>
<dbReference type="PDB" id="8BQ6">
    <property type="method" value="EM"/>
    <property type="resolution" value="2.80 A"/>
    <property type="chains" value="B=1-218"/>
</dbReference>
<dbReference type="PDBsum" id="7A24"/>
<dbReference type="PDBsum" id="7AQR"/>
<dbReference type="PDBsum" id="7AR7"/>
<dbReference type="PDBsum" id="7AR8"/>
<dbReference type="PDBsum" id="7ARB"/>
<dbReference type="PDBsum" id="8BEE"/>
<dbReference type="PDBsum" id="8BPX"/>
<dbReference type="PDBsum" id="8BQ5"/>
<dbReference type="PDBsum" id="8BQ6"/>
<dbReference type="EMDB" id="EMD-11878"/>
<dbReference type="EMDB" id="EMD-15999"/>
<dbReference type="EMDB" id="EMD-16168"/>
<dbReference type="EMDB" id="EMD-16171"/>
<dbReference type="EMDB" id="EMD-16172"/>
<dbReference type="SMR" id="Q42577"/>
<dbReference type="BioGRID" id="16327">
    <property type="interactions" value="17"/>
</dbReference>
<dbReference type="FunCoup" id="Q42577">
    <property type="interactions" value="2622"/>
</dbReference>
<dbReference type="IntAct" id="Q42577">
    <property type="interactions" value="3"/>
</dbReference>
<dbReference type="STRING" id="3702.Q42577"/>
<dbReference type="TCDB" id="3.D.1.6.3">
    <property type="family name" value="the h+ or na+-translocating nadh dehydrogenase (ndh) family"/>
</dbReference>
<dbReference type="iPTMnet" id="Q42577"/>
<dbReference type="PaxDb" id="3702-AT5G11770.1"/>
<dbReference type="ProteomicsDB" id="238873"/>
<dbReference type="EnsemblPlants" id="AT5G11770.1">
    <property type="protein sequence ID" value="AT5G11770.1"/>
    <property type="gene ID" value="AT5G11770"/>
</dbReference>
<dbReference type="GeneID" id="831049"/>
<dbReference type="Gramene" id="AT5G11770.1">
    <property type="protein sequence ID" value="AT5G11770.1"/>
    <property type="gene ID" value="AT5G11770"/>
</dbReference>
<dbReference type="KEGG" id="ath:AT5G11770"/>
<dbReference type="Araport" id="AT5G11770"/>
<dbReference type="TAIR" id="AT5G11770"/>
<dbReference type="eggNOG" id="KOG1687">
    <property type="taxonomic scope" value="Eukaryota"/>
</dbReference>
<dbReference type="HOGENOM" id="CLU_055737_1_2_1"/>
<dbReference type="InParanoid" id="Q42577"/>
<dbReference type="OMA" id="GCGGIEM"/>
<dbReference type="OrthoDB" id="268400at2759"/>
<dbReference type="PhylomeDB" id="Q42577"/>
<dbReference type="BioCyc" id="ARA:AT5G11770-MONOMER"/>
<dbReference type="BioCyc" id="MetaCyc:AT5G11770-MONOMER"/>
<dbReference type="PRO" id="PR:Q42577"/>
<dbReference type="Proteomes" id="UP000006548">
    <property type="component" value="Chromosome 5"/>
</dbReference>
<dbReference type="ExpressionAtlas" id="Q42577">
    <property type="expression patterns" value="baseline and differential"/>
</dbReference>
<dbReference type="GO" id="GO:0005739">
    <property type="term" value="C:mitochondrion"/>
    <property type="evidence" value="ECO:0000314"/>
    <property type="project" value="TAIR"/>
</dbReference>
<dbReference type="GO" id="GO:0005886">
    <property type="term" value="C:plasma membrane"/>
    <property type="evidence" value="ECO:0007005"/>
    <property type="project" value="TAIR"/>
</dbReference>
<dbReference type="GO" id="GO:0051539">
    <property type="term" value="F:4 iron, 4 sulfur cluster binding"/>
    <property type="evidence" value="ECO:0007669"/>
    <property type="project" value="UniProtKB-KW"/>
</dbReference>
<dbReference type="GO" id="GO:0008137">
    <property type="term" value="F:NADH dehydrogenase (ubiquinone) activity"/>
    <property type="evidence" value="ECO:0007669"/>
    <property type="project" value="UniProtKB-EC"/>
</dbReference>
<dbReference type="GO" id="GO:0048038">
    <property type="term" value="F:quinone binding"/>
    <property type="evidence" value="ECO:0007669"/>
    <property type="project" value="InterPro"/>
</dbReference>
<dbReference type="GO" id="GO:0008270">
    <property type="term" value="F:zinc ion binding"/>
    <property type="evidence" value="ECO:0007005"/>
    <property type="project" value="TAIR"/>
</dbReference>
<dbReference type="FunFam" id="3.40.50.12280:FF:000001">
    <property type="entry name" value="NADH-quinone oxidoreductase subunit B 2"/>
    <property type="match status" value="1"/>
</dbReference>
<dbReference type="Gene3D" id="3.40.50.12280">
    <property type="match status" value="1"/>
</dbReference>
<dbReference type="HAMAP" id="MF_01356">
    <property type="entry name" value="NDH1_NuoB"/>
    <property type="match status" value="1"/>
</dbReference>
<dbReference type="InterPro" id="IPR006137">
    <property type="entry name" value="NADH_UbQ_OxRdtase-like_20kDa"/>
</dbReference>
<dbReference type="InterPro" id="IPR006138">
    <property type="entry name" value="NADH_UQ_OxRdtase_20Kd_su"/>
</dbReference>
<dbReference type="NCBIfam" id="TIGR01957">
    <property type="entry name" value="nuoB_fam"/>
    <property type="match status" value="1"/>
</dbReference>
<dbReference type="NCBIfam" id="NF005012">
    <property type="entry name" value="PRK06411.1"/>
    <property type="match status" value="1"/>
</dbReference>
<dbReference type="PANTHER" id="PTHR11995">
    <property type="entry name" value="NADH DEHYDROGENASE"/>
    <property type="match status" value="1"/>
</dbReference>
<dbReference type="PANTHER" id="PTHR11995:SF14">
    <property type="entry name" value="NADH DEHYDROGENASE [UBIQUINONE] IRON-SULFUR PROTEIN 7, MITOCHONDRIAL"/>
    <property type="match status" value="1"/>
</dbReference>
<dbReference type="Pfam" id="PF01058">
    <property type="entry name" value="Oxidored_q6"/>
    <property type="match status" value="1"/>
</dbReference>
<dbReference type="SUPFAM" id="SSF56770">
    <property type="entry name" value="HydA/Nqo6-like"/>
    <property type="match status" value="1"/>
</dbReference>
<dbReference type="PROSITE" id="PS01150">
    <property type="entry name" value="COMPLEX1_20K"/>
    <property type="match status" value="1"/>
</dbReference>
<organism>
    <name type="scientific">Arabidopsis thaliana</name>
    <name type="common">Mouse-ear cress</name>
    <dbReference type="NCBI Taxonomy" id="3702"/>
    <lineage>
        <taxon>Eukaryota</taxon>
        <taxon>Viridiplantae</taxon>
        <taxon>Streptophyta</taxon>
        <taxon>Embryophyta</taxon>
        <taxon>Tracheophyta</taxon>
        <taxon>Spermatophyta</taxon>
        <taxon>Magnoliopsida</taxon>
        <taxon>eudicotyledons</taxon>
        <taxon>Gunneridae</taxon>
        <taxon>Pentapetalae</taxon>
        <taxon>rosids</taxon>
        <taxon>malvids</taxon>
        <taxon>Brassicales</taxon>
        <taxon>Brassicaceae</taxon>
        <taxon>Camelineae</taxon>
        <taxon>Arabidopsis</taxon>
    </lineage>
</organism>
<protein>
    <recommendedName>
        <fullName>NADH dehydrogenase [ubiquinone] iron-sulfur protein 7, mitochondrial</fullName>
        <ecNumber>7.1.1.2</ecNumber>
    </recommendedName>
</protein>
<proteinExistence type="evidence at protein level"/>
<reference key="1">
    <citation type="journal article" date="1996" name="Plant Mol. Biol.">
        <title>The plant mitochondrial 22 kDa (PSST) subunit of respiratory chain complex I is encoded by a nuclear gene with enhanced transcript levels in flowers.</title>
        <authorList>
            <person name="Heiser V."/>
            <person name="Grohmann L."/>
            <person name="Brennicke A."/>
        </authorList>
    </citation>
    <scope>NUCLEOTIDE SEQUENCE [MRNA]</scope>
    <source>
        <strain>cv. C24</strain>
    </source>
</reference>
<reference key="2">
    <citation type="journal article" date="2000" name="Nature">
        <title>Sequence and analysis of chromosome 5 of the plant Arabidopsis thaliana.</title>
        <authorList>
            <person name="Tabata S."/>
            <person name="Kaneko T."/>
            <person name="Nakamura Y."/>
            <person name="Kotani H."/>
            <person name="Kato T."/>
            <person name="Asamizu E."/>
            <person name="Miyajima N."/>
            <person name="Sasamoto S."/>
            <person name="Kimura T."/>
            <person name="Hosouchi T."/>
            <person name="Kawashima K."/>
            <person name="Kohara M."/>
            <person name="Matsumoto M."/>
            <person name="Matsuno A."/>
            <person name="Muraki A."/>
            <person name="Nakayama S."/>
            <person name="Nakazaki N."/>
            <person name="Naruo K."/>
            <person name="Okumura S."/>
            <person name="Shinpo S."/>
            <person name="Takeuchi C."/>
            <person name="Wada T."/>
            <person name="Watanabe A."/>
            <person name="Yamada M."/>
            <person name="Yasuda M."/>
            <person name="Sato S."/>
            <person name="de la Bastide M."/>
            <person name="Huang E."/>
            <person name="Spiegel L."/>
            <person name="Gnoj L."/>
            <person name="O'Shaughnessy A."/>
            <person name="Preston R."/>
            <person name="Habermann K."/>
            <person name="Murray J."/>
            <person name="Johnson D."/>
            <person name="Rohlfing T."/>
            <person name="Nelson J."/>
            <person name="Stoneking T."/>
            <person name="Pepin K."/>
            <person name="Spieth J."/>
            <person name="Sekhon M."/>
            <person name="Armstrong J."/>
            <person name="Becker M."/>
            <person name="Belter E."/>
            <person name="Cordum H."/>
            <person name="Cordes M."/>
            <person name="Courtney L."/>
            <person name="Courtney W."/>
            <person name="Dante M."/>
            <person name="Du H."/>
            <person name="Edwards J."/>
            <person name="Fryman J."/>
            <person name="Haakensen B."/>
            <person name="Lamar E."/>
            <person name="Latreille P."/>
            <person name="Leonard S."/>
            <person name="Meyer R."/>
            <person name="Mulvaney E."/>
            <person name="Ozersky P."/>
            <person name="Riley A."/>
            <person name="Strowmatt C."/>
            <person name="Wagner-McPherson C."/>
            <person name="Wollam A."/>
            <person name="Yoakum M."/>
            <person name="Bell M."/>
            <person name="Dedhia N."/>
            <person name="Parnell L."/>
            <person name="Shah R."/>
            <person name="Rodriguez M."/>
            <person name="Hoon See L."/>
            <person name="Vil D."/>
            <person name="Baker J."/>
            <person name="Kirchoff K."/>
            <person name="Toth K."/>
            <person name="King L."/>
            <person name="Bahret A."/>
            <person name="Miller B."/>
            <person name="Marra M.A."/>
            <person name="Martienssen R."/>
            <person name="McCombie W.R."/>
            <person name="Wilson R.K."/>
            <person name="Murphy G."/>
            <person name="Bancroft I."/>
            <person name="Volckaert G."/>
            <person name="Wambutt R."/>
            <person name="Duesterhoeft A."/>
            <person name="Stiekema W."/>
            <person name="Pohl T."/>
            <person name="Entian K.-D."/>
            <person name="Terryn N."/>
            <person name="Hartley N."/>
            <person name="Bent E."/>
            <person name="Johnson S."/>
            <person name="Langham S.-A."/>
            <person name="McCullagh B."/>
            <person name="Robben J."/>
            <person name="Grymonprez B."/>
            <person name="Zimmermann W."/>
            <person name="Ramsperger U."/>
            <person name="Wedler H."/>
            <person name="Balke K."/>
            <person name="Wedler E."/>
            <person name="Peters S."/>
            <person name="van Staveren M."/>
            <person name="Dirkse W."/>
            <person name="Mooijman P."/>
            <person name="Klein Lankhorst R."/>
            <person name="Weitzenegger T."/>
            <person name="Bothe G."/>
            <person name="Rose M."/>
            <person name="Hauf J."/>
            <person name="Berneiser S."/>
            <person name="Hempel S."/>
            <person name="Feldpausch M."/>
            <person name="Lamberth S."/>
            <person name="Villarroel R."/>
            <person name="Gielen J."/>
            <person name="Ardiles W."/>
            <person name="Bents O."/>
            <person name="Lemcke K."/>
            <person name="Kolesov G."/>
            <person name="Mayer K.F.X."/>
            <person name="Rudd S."/>
            <person name="Schoof H."/>
            <person name="Schueller C."/>
            <person name="Zaccaria P."/>
            <person name="Mewes H.-W."/>
            <person name="Bevan M."/>
            <person name="Fransz P.F."/>
        </authorList>
    </citation>
    <scope>NUCLEOTIDE SEQUENCE [LARGE SCALE GENOMIC DNA]</scope>
    <source>
        <strain>cv. Columbia</strain>
    </source>
</reference>
<reference key="3">
    <citation type="journal article" date="2017" name="Plant J.">
        <title>Araport11: a complete reannotation of the Arabidopsis thaliana reference genome.</title>
        <authorList>
            <person name="Cheng C.Y."/>
            <person name="Krishnakumar V."/>
            <person name="Chan A.P."/>
            <person name="Thibaud-Nissen F."/>
            <person name="Schobel S."/>
            <person name="Town C.D."/>
        </authorList>
    </citation>
    <scope>GENOME REANNOTATION</scope>
    <source>
        <strain>cv. Columbia</strain>
    </source>
</reference>
<reference key="4">
    <citation type="journal article" date="2003" name="Science">
        <title>Empirical analysis of transcriptional activity in the Arabidopsis genome.</title>
        <authorList>
            <person name="Yamada K."/>
            <person name="Lim J."/>
            <person name="Dale J.M."/>
            <person name="Chen H."/>
            <person name="Shinn P."/>
            <person name="Palm C.J."/>
            <person name="Southwick A.M."/>
            <person name="Wu H.C."/>
            <person name="Kim C.J."/>
            <person name="Nguyen M."/>
            <person name="Pham P.K."/>
            <person name="Cheuk R.F."/>
            <person name="Karlin-Newmann G."/>
            <person name="Liu S.X."/>
            <person name="Lam B."/>
            <person name="Sakano H."/>
            <person name="Wu T."/>
            <person name="Yu G."/>
            <person name="Miranda M."/>
            <person name="Quach H.L."/>
            <person name="Tripp M."/>
            <person name="Chang C.H."/>
            <person name="Lee J.M."/>
            <person name="Toriumi M.J."/>
            <person name="Chan M.M."/>
            <person name="Tang C.C."/>
            <person name="Onodera C.S."/>
            <person name="Deng J.M."/>
            <person name="Akiyama K."/>
            <person name="Ansari Y."/>
            <person name="Arakawa T."/>
            <person name="Banh J."/>
            <person name="Banno F."/>
            <person name="Bowser L."/>
            <person name="Brooks S.Y."/>
            <person name="Carninci P."/>
            <person name="Chao Q."/>
            <person name="Choy N."/>
            <person name="Enju A."/>
            <person name="Goldsmith A.D."/>
            <person name="Gurjal M."/>
            <person name="Hansen N.F."/>
            <person name="Hayashizaki Y."/>
            <person name="Johnson-Hopson C."/>
            <person name="Hsuan V.W."/>
            <person name="Iida K."/>
            <person name="Karnes M."/>
            <person name="Khan S."/>
            <person name="Koesema E."/>
            <person name="Ishida J."/>
            <person name="Jiang P.X."/>
            <person name="Jones T."/>
            <person name="Kawai J."/>
            <person name="Kamiya A."/>
            <person name="Meyers C."/>
            <person name="Nakajima M."/>
            <person name="Narusaka M."/>
            <person name="Seki M."/>
            <person name="Sakurai T."/>
            <person name="Satou M."/>
            <person name="Tamse R."/>
            <person name="Vaysberg M."/>
            <person name="Wallender E.K."/>
            <person name="Wong C."/>
            <person name="Yamamura Y."/>
            <person name="Yuan S."/>
            <person name="Shinozaki K."/>
            <person name="Davis R.W."/>
            <person name="Theologis A."/>
            <person name="Ecker J.R."/>
        </authorList>
    </citation>
    <scope>NUCLEOTIDE SEQUENCE [LARGE SCALE MRNA]</scope>
    <source>
        <strain>cv. Columbia</strain>
    </source>
</reference>
<reference key="5">
    <citation type="submission" date="2002-03" db="EMBL/GenBank/DDBJ databases">
        <title>Full-length cDNA from Arabidopsis thaliana.</title>
        <authorList>
            <person name="Brover V.V."/>
            <person name="Troukhan M.E."/>
            <person name="Alexandrov N.A."/>
            <person name="Lu Y.-P."/>
            <person name="Flavell R.B."/>
            <person name="Feldmann K.A."/>
        </authorList>
    </citation>
    <scope>NUCLEOTIDE SEQUENCE [LARGE SCALE MRNA]</scope>
</reference>
<reference key="6">
    <citation type="journal article" date="2004" name="Plant Cell">
        <title>Experimental analysis of the Arabidopsis mitochondrial proteome highlights signaling and regulatory components, provides assessment of targeting prediction programs, and indicates plant-specific mitochondrial proteins.</title>
        <authorList>
            <person name="Heazlewood J.L."/>
            <person name="Tonti-Filippini J.S."/>
            <person name="Gout A.M."/>
            <person name="Day D.A."/>
            <person name="Whelan J."/>
            <person name="Millar A.H."/>
        </authorList>
    </citation>
    <scope>IDENTIFICATION BY MASS SPECTROMETRY</scope>
    <scope>SUBCELLULAR LOCATION [LARGE SCALE ANALYSIS]</scope>
    <source>
        <strain>cv. Landsberg erecta</strain>
    </source>
</reference>